<dbReference type="EMBL" id="CP000521">
    <property type="protein sequence ID" value="ABO12744.1"/>
    <property type="molecule type" value="Genomic_DNA"/>
</dbReference>
<dbReference type="RefSeq" id="WP_000125378.1">
    <property type="nucleotide sequence ID" value="NZ_CP053098.1"/>
</dbReference>
<dbReference type="SMR" id="A3M750"/>
<dbReference type="GeneID" id="92894652"/>
<dbReference type="KEGG" id="acb:A1S_2322"/>
<dbReference type="HOGENOM" id="CLU_047155_0_2_6"/>
<dbReference type="GO" id="GO:0005737">
    <property type="term" value="C:cytoplasm"/>
    <property type="evidence" value="ECO:0007669"/>
    <property type="project" value="UniProtKB-SubCell"/>
</dbReference>
<dbReference type="GO" id="GO:0003746">
    <property type="term" value="F:translation elongation factor activity"/>
    <property type="evidence" value="ECO:0007669"/>
    <property type="project" value="UniProtKB-UniRule"/>
</dbReference>
<dbReference type="CDD" id="cd14275">
    <property type="entry name" value="UBA_EF-Ts"/>
    <property type="match status" value="1"/>
</dbReference>
<dbReference type="FunFam" id="1.10.286.20:FF:000001">
    <property type="entry name" value="Elongation factor Ts"/>
    <property type="match status" value="1"/>
</dbReference>
<dbReference type="FunFam" id="1.10.8.10:FF:000001">
    <property type="entry name" value="Elongation factor Ts"/>
    <property type="match status" value="1"/>
</dbReference>
<dbReference type="FunFam" id="3.30.479.20:FF:000001">
    <property type="entry name" value="Elongation factor Ts"/>
    <property type="match status" value="1"/>
</dbReference>
<dbReference type="Gene3D" id="1.10.286.20">
    <property type="match status" value="1"/>
</dbReference>
<dbReference type="Gene3D" id="1.10.8.10">
    <property type="entry name" value="DNA helicase RuvA subunit, C-terminal domain"/>
    <property type="match status" value="1"/>
</dbReference>
<dbReference type="Gene3D" id="3.30.479.20">
    <property type="entry name" value="Elongation factor Ts, dimerisation domain"/>
    <property type="match status" value="2"/>
</dbReference>
<dbReference type="HAMAP" id="MF_00050">
    <property type="entry name" value="EF_Ts"/>
    <property type="match status" value="1"/>
</dbReference>
<dbReference type="InterPro" id="IPR036402">
    <property type="entry name" value="EF-Ts_dimer_sf"/>
</dbReference>
<dbReference type="InterPro" id="IPR001816">
    <property type="entry name" value="Transl_elong_EFTs/EF1B"/>
</dbReference>
<dbReference type="InterPro" id="IPR014039">
    <property type="entry name" value="Transl_elong_EFTs/EF1B_dimer"/>
</dbReference>
<dbReference type="InterPro" id="IPR018101">
    <property type="entry name" value="Transl_elong_Ts_CS"/>
</dbReference>
<dbReference type="InterPro" id="IPR009060">
    <property type="entry name" value="UBA-like_sf"/>
</dbReference>
<dbReference type="NCBIfam" id="TIGR00116">
    <property type="entry name" value="tsf"/>
    <property type="match status" value="1"/>
</dbReference>
<dbReference type="PANTHER" id="PTHR11741">
    <property type="entry name" value="ELONGATION FACTOR TS"/>
    <property type="match status" value="1"/>
</dbReference>
<dbReference type="PANTHER" id="PTHR11741:SF0">
    <property type="entry name" value="ELONGATION FACTOR TS, MITOCHONDRIAL"/>
    <property type="match status" value="1"/>
</dbReference>
<dbReference type="Pfam" id="PF00889">
    <property type="entry name" value="EF_TS"/>
    <property type="match status" value="1"/>
</dbReference>
<dbReference type="SUPFAM" id="SSF54713">
    <property type="entry name" value="Elongation factor Ts (EF-Ts), dimerisation domain"/>
    <property type="match status" value="1"/>
</dbReference>
<dbReference type="SUPFAM" id="SSF46934">
    <property type="entry name" value="UBA-like"/>
    <property type="match status" value="1"/>
</dbReference>
<dbReference type="PROSITE" id="PS01126">
    <property type="entry name" value="EF_TS_1"/>
    <property type="match status" value="1"/>
</dbReference>
<dbReference type="PROSITE" id="PS01127">
    <property type="entry name" value="EF_TS_2"/>
    <property type="match status" value="1"/>
</dbReference>
<reference key="1">
    <citation type="journal article" date="2007" name="Genes Dev.">
        <title>New insights into Acinetobacter baumannii pathogenesis revealed by high-density pyrosequencing and transposon mutagenesis.</title>
        <authorList>
            <person name="Smith M.G."/>
            <person name="Gianoulis T.A."/>
            <person name="Pukatzki S."/>
            <person name="Mekalanos J.J."/>
            <person name="Ornston L.N."/>
            <person name="Gerstein M."/>
            <person name="Snyder M."/>
        </authorList>
    </citation>
    <scope>NUCLEOTIDE SEQUENCE [LARGE SCALE GENOMIC DNA]</scope>
    <source>
        <strain>ATCC 17978 / DSM 105126 / CIP 53.77 / LMG 1025 / NCDC KC755 / 5377</strain>
    </source>
</reference>
<name>EFTS_ACIBT</name>
<feature type="chain" id="PRO_1000006043" description="Elongation factor Ts">
    <location>
        <begin position="1"/>
        <end position="291"/>
    </location>
</feature>
<feature type="region of interest" description="Involved in Mg(2+) ion dislocation from EF-Tu" evidence="1">
    <location>
        <begin position="80"/>
        <end position="83"/>
    </location>
</feature>
<proteinExistence type="inferred from homology"/>
<sequence>MTAITASMVKELRDRTGLAMMECKKALTEANGDIELAIDNLRKSGQAKAAKKAGNIAADGAITIVQDGNKAILVEVNCQTDFVAKDENFSNFAHTVAAAALAAGETDAAKIAELKLADGQSVEEARIALVQKIGENIQVRRAKIVEGEQLAIYKHGLKIGVVVSYTGDADTGKGIAMHVAAFNPVAVNAEAVPADLIAKEKEIAEAKALESGKPANIVEKMVTGSVEKYLNEVALDRQMYVIDNEKKVADVLKATGTNVANFVRFEVGEGIEKKAELSFAEEVAAAQAAAK</sequence>
<evidence type="ECO:0000255" key="1">
    <source>
        <dbReference type="HAMAP-Rule" id="MF_00050"/>
    </source>
</evidence>
<organism>
    <name type="scientific">Acinetobacter baumannii (strain ATCC 17978 / DSM 105126 / CIP 53.77 / LMG 1025 / NCDC KC755 / 5377)</name>
    <dbReference type="NCBI Taxonomy" id="400667"/>
    <lineage>
        <taxon>Bacteria</taxon>
        <taxon>Pseudomonadati</taxon>
        <taxon>Pseudomonadota</taxon>
        <taxon>Gammaproteobacteria</taxon>
        <taxon>Moraxellales</taxon>
        <taxon>Moraxellaceae</taxon>
        <taxon>Acinetobacter</taxon>
        <taxon>Acinetobacter calcoaceticus/baumannii complex</taxon>
    </lineage>
</organism>
<gene>
    <name evidence="1" type="primary">tsf</name>
    <name type="ordered locus">A1S_2322</name>
</gene>
<accession>A3M750</accession>
<protein>
    <recommendedName>
        <fullName evidence="1">Elongation factor Ts</fullName>
        <shortName evidence="1">EF-Ts</shortName>
    </recommendedName>
</protein>
<comment type="function">
    <text evidence="1">Associates with the EF-Tu.GDP complex and induces the exchange of GDP to GTP. It remains bound to the aminoacyl-tRNA.EF-Tu.GTP complex up to the GTP hydrolysis stage on the ribosome.</text>
</comment>
<comment type="subcellular location">
    <subcellularLocation>
        <location evidence="1">Cytoplasm</location>
    </subcellularLocation>
</comment>
<comment type="similarity">
    <text evidence="1">Belongs to the EF-Ts family.</text>
</comment>
<keyword id="KW-0963">Cytoplasm</keyword>
<keyword id="KW-0251">Elongation factor</keyword>
<keyword id="KW-0648">Protein biosynthesis</keyword>